<evidence type="ECO:0000255" key="1">
    <source>
        <dbReference type="HAMAP-Rule" id="MF_00534"/>
    </source>
</evidence>
<accession>A0PY64</accession>
<proteinExistence type="inferred from homology"/>
<feature type="chain" id="PRO_1000051386" description="Asparagine--tRNA ligase">
    <location>
        <begin position="1"/>
        <end position="463"/>
    </location>
</feature>
<sequence>METVLVKQLYRETEKFAGKEVKISGWIRTLRASNKFGFIEVNDGSFFKNIQVVFGAELENFKEISKYAISSSISVEGEVVITEGAKQPFEIHAKKVVLEGKSDADYPLQKKRHTFEYLRSIAHLRPRSNAFSAVFRVRSLAAYAIHKFFQDQGFVYVHTPIITGSDCEGAGEMFRVTTLDMENPPKDEKGNVDYKEDFFGKQANLTVSGQLEAEIYALAFRNVYTFGPTFRAENSNTARHASEFWMIEPEMAFAELKDYMDVAEQMVKYIINYVRENAPEEMEFFNKFIDKGLLERLDNVVNSDFARISYTEAVEILQKSGAEFEYPVEWGIDLQTEHERYLTEQIYKKPVFVTDYPKDIKAFYMRMNDDNKTVAAADLLVPGIGEIIGGSQREERLDILEARMAELGLEKEDYWWYLELRKYGETKHAGYGLGFERMIMYLTGMGNIRDVIPFPRTPGVSEF</sequence>
<organism>
    <name type="scientific">Clostridium novyi (strain NT)</name>
    <dbReference type="NCBI Taxonomy" id="386415"/>
    <lineage>
        <taxon>Bacteria</taxon>
        <taxon>Bacillati</taxon>
        <taxon>Bacillota</taxon>
        <taxon>Clostridia</taxon>
        <taxon>Eubacteriales</taxon>
        <taxon>Clostridiaceae</taxon>
        <taxon>Clostridium</taxon>
    </lineage>
</organism>
<comment type="catalytic activity">
    <reaction evidence="1">
        <text>tRNA(Asn) + L-asparagine + ATP = L-asparaginyl-tRNA(Asn) + AMP + diphosphate + H(+)</text>
        <dbReference type="Rhea" id="RHEA:11180"/>
        <dbReference type="Rhea" id="RHEA-COMP:9659"/>
        <dbReference type="Rhea" id="RHEA-COMP:9674"/>
        <dbReference type="ChEBI" id="CHEBI:15378"/>
        <dbReference type="ChEBI" id="CHEBI:30616"/>
        <dbReference type="ChEBI" id="CHEBI:33019"/>
        <dbReference type="ChEBI" id="CHEBI:58048"/>
        <dbReference type="ChEBI" id="CHEBI:78442"/>
        <dbReference type="ChEBI" id="CHEBI:78515"/>
        <dbReference type="ChEBI" id="CHEBI:456215"/>
        <dbReference type="EC" id="6.1.1.22"/>
    </reaction>
</comment>
<comment type="subunit">
    <text evidence="1">Homodimer.</text>
</comment>
<comment type="subcellular location">
    <subcellularLocation>
        <location evidence="1">Cytoplasm</location>
    </subcellularLocation>
</comment>
<comment type="similarity">
    <text evidence="1">Belongs to the class-II aminoacyl-tRNA synthetase family.</text>
</comment>
<name>SYN_CLONN</name>
<protein>
    <recommendedName>
        <fullName evidence="1">Asparagine--tRNA ligase</fullName>
        <ecNumber evidence="1">6.1.1.22</ecNumber>
    </recommendedName>
    <alternativeName>
        <fullName evidence="1">Asparaginyl-tRNA synthetase</fullName>
        <shortName evidence="1">AsnRS</shortName>
    </alternativeName>
</protein>
<keyword id="KW-0030">Aminoacyl-tRNA synthetase</keyword>
<keyword id="KW-0067">ATP-binding</keyword>
<keyword id="KW-0963">Cytoplasm</keyword>
<keyword id="KW-0436">Ligase</keyword>
<keyword id="KW-0547">Nucleotide-binding</keyword>
<keyword id="KW-0648">Protein biosynthesis</keyword>
<keyword id="KW-1185">Reference proteome</keyword>
<reference key="1">
    <citation type="journal article" date="2006" name="Nat. Biotechnol.">
        <title>The genome and transcriptomes of the anti-tumor agent Clostridium novyi-NT.</title>
        <authorList>
            <person name="Bettegowda C."/>
            <person name="Huang X."/>
            <person name="Lin J."/>
            <person name="Cheong I."/>
            <person name="Kohli M."/>
            <person name="Szabo S.A."/>
            <person name="Zhang X."/>
            <person name="Diaz L.A. Jr."/>
            <person name="Velculescu V.E."/>
            <person name="Parmigiani G."/>
            <person name="Kinzler K.W."/>
            <person name="Vogelstein B."/>
            <person name="Zhou S."/>
        </authorList>
    </citation>
    <scope>NUCLEOTIDE SEQUENCE [LARGE SCALE GENOMIC DNA]</scope>
    <source>
        <strain>NT</strain>
    </source>
</reference>
<dbReference type="EC" id="6.1.1.22" evidence="1"/>
<dbReference type="EMBL" id="CP000382">
    <property type="protein sequence ID" value="ABK61604.1"/>
    <property type="molecule type" value="Genomic_DNA"/>
</dbReference>
<dbReference type="RefSeq" id="WP_011721324.1">
    <property type="nucleotide sequence ID" value="NC_008593.1"/>
</dbReference>
<dbReference type="SMR" id="A0PY64"/>
<dbReference type="STRING" id="386415.NT01CX_1233"/>
<dbReference type="KEGG" id="cno:NT01CX_1233"/>
<dbReference type="PATRIC" id="fig|386415.7.peg.343"/>
<dbReference type="eggNOG" id="COG0017">
    <property type="taxonomic scope" value="Bacteria"/>
</dbReference>
<dbReference type="HOGENOM" id="CLU_004553_2_0_9"/>
<dbReference type="Proteomes" id="UP000008220">
    <property type="component" value="Chromosome"/>
</dbReference>
<dbReference type="GO" id="GO:0005737">
    <property type="term" value="C:cytoplasm"/>
    <property type="evidence" value="ECO:0007669"/>
    <property type="project" value="UniProtKB-SubCell"/>
</dbReference>
<dbReference type="GO" id="GO:0004816">
    <property type="term" value="F:asparagine-tRNA ligase activity"/>
    <property type="evidence" value="ECO:0007669"/>
    <property type="project" value="UniProtKB-UniRule"/>
</dbReference>
<dbReference type="GO" id="GO:0005524">
    <property type="term" value="F:ATP binding"/>
    <property type="evidence" value="ECO:0007669"/>
    <property type="project" value="UniProtKB-UniRule"/>
</dbReference>
<dbReference type="GO" id="GO:0140096">
    <property type="term" value="F:catalytic activity, acting on a protein"/>
    <property type="evidence" value="ECO:0007669"/>
    <property type="project" value="UniProtKB-ARBA"/>
</dbReference>
<dbReference type="GO" id="GO:0003676">
    <property type="term" value="F:nucleic acid binding"/>
    <property type="evidence" value="ECO:0007669"/>
    <property type="project" value="InterPro"/>
</dbReference>
<dbReference type="GO" id="GO:0016740">
    <property type="term" value="F:transferase activity"/>
    <property type="evidence" value="ECO:0007669"/>
    <property type="project" value="UniProtKB-ARBA"/>
</dbReference>
<dbReference type="GO" id="GO:0006421">
    <property type="term" value="P:asparaginyl-tRNA aminoacylation"/>
    <property type="evidence" value="ECO:0007669"/>
    <property type="project" value="UniProtKB-UniRule"/>
</dbReference>
<dbReference type="CDD" id="cd00776">
    <property type="entry name" value="AsxRS_core"/>
    <property type="match status" value="1"/>
</dbReference>
<dbReference type="CDD" id="cd04318">
    <property type="entry name" value="EcAsnRS_like_N"/>
    <property type="match status" value="1"/>
</dbReference>
<dbReference type="FunFam" id="3.30.930.10:FF:000016">
    <property type="entry name" value="Asparagine--tRNA ligase"/>
    <property type="match status" value="1"/>
</dbReference>
<dbReference type="Gene3D" id="3.30.930.10">
    <property type="entry name" value="Bira Bifunctional Protein, Domain 2"/>
    <property type="match status" value="1"/>
</dbReference>
<dbReference type="Gene3D" id="2.40.50.140">
    <property type="entry name" value="Nucleic acid-binding proteins"/>
    <property type="match status" value="1"/>
</dbReference>
<dbReference type="HAMAP" id="MF_00534">
    <property type="entry name" value="Asn_tRNA_synth"/>
    <property type="match status" value="1"/>
</dbReference>
<dbReference type="InterPro" id="IPR004364">
    <property type="entry name" value="Aa-tRNA-synt_II"/>
</dbReference>
<dbReference type="InterPro" id="IPR006195">
    <property type="entry name" value="aa-tRNA-synth_II"/>
</dbReference>
<dbReference type="InterPro" id="IPR045864">
    <property type="entry name" value="aa-tRNA-synth_II/BPL/LPL"/>
</dbReference>
<dbReference type="InterPro" id="IPR004522">
    <property type="entry name" value="Asn-tRNA-ligase"/>
</dbReference>
<dbReference type="InterPro" id="IPR002312">
    <property type="entry name" value="Asp/Asn-tRNA-synth_IIb"/>
</dbReference>
<dbReference type="InterPro" id="IPR012340">
    <property type="entry name" value="NA-bd_OB-fold"/>
</dbReference>
<dbReference type="InterPro" id="IPR004365">
    <property type="entry name" value="NA-bd_OB_tRNA"/>
</dbReference>
<dbReference type="NCBIfam" id="TIGR00457">
    <property type="entry name" value="asnS"/>
    <property type="match status" value="1"/>
</dbReference>
<dbReference type="NCBIfam" id="NF003037">
    <property type="entry name" value="PRK03932.1"/>
    <property type="match status" value="1"/>
</dbReference>
<dbReference type="PANTHER" id="PTHR22594:SF34">
    <property type="entry name" value="ASPARAGINE--TRNA LIGASE, MITOCHONDRIAL-RELATED"/>
    <property type="match status" value="1"/>
</dbReference>
<dbReference type="PANTHER" id="PTHR22594">
    <property type="entry name" value="ASPARTYL/LYSYL-TRNA SYNTHETASE"/>
    <property type="match status" value="1"/>
</dbReference>
<dbReference type="Pfam" id="PF00152">
    <property type="entry name" value="tRNA-synt_2"/>
    <property type="match status" value="1"/>
</dbReference>
<dbReference type="Pfam" id="PF01336">
    <property type="entry name" value="tRNA_anti-codon"/>
    <property type="match status" value="1"/>
</dbReference>
<dbReference type="PRINTS" id="PR01042">
    <property type="entry name" value="TRNASYNTHASP"/>
</dbReference>
<dbReference type="SUPFAM" id="SSF55681">
    <property type="entry name" value="Class II aaRS and biotin synthetases"/>
    <property type="match status" value="1"/>
</dbReference>
<dbReference type="SUPFAM" id="SSF50249">
    <property type="entry name" value="Nucleic acid-binding proteins"/>
    <property type="match status" value="1"/>
</dbReference>
<dbReference type="PROSITE" id="PS50862">
    <property type="entry name" value="AA_TRNA_LIGASE_II"/>
    <property type="match status" value="1"/>
</dbReference>
<gene>
    <name evidence="1" type="primary">asnS</name>
    <name type="ordered locus">NT01CX_1233</name>
</gene>